<dbReference type="EMBL" id="AK029994">
    <property type="protein sequence ID" value="BAC26722.1"/>
    <property type="molecule type" value="mRNA"/>
</dbReference>
<dbReference type="EMBL" id="AC124175">
    <property type="status" value="NOT_ANNOTATED_CDS"/>
    <property type="molecule type" value="Genomic_DNA"/>
</dbReference>
<dbReference type="EMBL" id="AC124538">
    <property type="status" value="NOT_ANNOTATED_CDS"/>
    <property type="molecule type" value="Genomic_DNA"/>
</dbReference>
<dbReference type="CCDS" id="CCDS35564.1"/>
<dbReference type="RefSeq" id="NP_084301.2">
    <property type="nucleotide sequence ID" value="NM_030025.3"/>
</dbReference>
<dbReference type="SMR" id="Q8CDI7"/>
<dbReference type="BioGRID" id="219096">
    <property type="interactions" value="2"/>
</dbReference>
<dbReference type="FunCoup" id="Q8CDI7">
    <property type="interactions" value="7"/>
</dbReference>
<dbReference type="STRING" id="10090.ENSMUSP00000027128"/>
<dbReference type="iPTMnet" id="Q8CDI7"/>
<dbReference type="PhosphoSitePlus" id="Q8CDI7"/>
<dbReference type="jPOST" id="Q8CDI7"/>
<dbReference type="PaxDb" id="10090-ENSMUSP00000027128"/>
<dbReference type="ProteomicsDB" id="265288"/>
<dbReference type="Antibodypedia" id="67231">
    <property type="antibodies" value="29 antibodies from 8 providers"/>
</dbReference>
<dbReference type="DNASU" id="78016"/>
<dbReference type="Ensembl" id="ENSMUST00000027128.11">
    <property type="protein sequence ID" value="ENSMUSP00000027128.5"/>
    <property type="gene ID" value="ENSMUSG00000025983.12"/>
</dbReference>
<dbReference type="GeneID" id="78016"/>
<dbReference type="KEGG" id="mmu:78016"/>
<dbReference type="UCSC" id="uc007azo.1">
    <property type="organism name" value="mouse"/>
</dbReference>
<dbReference type="AGR" id="MGI:1925266"/>
<dbReference type="CTD" id="284992"/>
<dbReference type="MGI" id="MGI:1925266">
    <property type="gene designation" value="Ccdc150"/>
</dbReference>
<dbReference type="VEuPathDB" id="HostDB:ENSMUSG00000025983"/>
<dbReference type="eggNOG" id="ENOG502QRGC">
    <property type="taxonomic scope" value="Eukaryota"/>
</dbReference>
<dbReference type="GeneTree" id="ENSGT00390000005285"/>
<dbReference type="HOGENOM" id="CLU_004802_0_0_1"/>
<dbReference type="InParanoid" id="Q8CDI7"/>
<dbReference type="OMA" id="TCRYNPG"/>
<dbReference type="OrthoDB" id="416454at2759"/>
<dbReference type="PhylomeDB" id="Q8CDI7"/>
<dbReference type="TreeFam" id="TF338017"/>
<dbReference type="BioGRID-ORCS" id="78016">
    <property type="hits" value="2 hits in 79 CRISPR screens"/>
</dbReference>
<dbReference type="PRO" id="PR:Q8CDI7"/>
<dbReference type="Proteomes" id="UP000000589">
    <property type="component" value="Chromosome 1"/>
</dbReference>
<dbReference type="RNAct" id="Q8CDI7">
    <property type="molecule type" value="protein"/>
</dbReference>
<dbReference type="Bgee" id="ENSMUSG00000025983">
    <property type="expression patterns" value="Expressed in spermatid and 28 other cell types or tissues"/>
</dbReference>
<dbReference type="ExpressionAtlas" id="Q8CDI7">
    <property type="expression patterns" value="baseline and differential"/>
</dbReference>
<dbReference type="InterPro" id="IPR038807">
    <property type="entry name" value="CCDC150"/>
</dbReference>
<dbReference type="PANTHER" id="PTHR35352">
    <property type="entry name" value="COILED-COIL DOMAIN-CONTAINING PROTEIN 150"/>
    <property type="match status" value="1"/>
</dbReference>
<dbReference type="PANTHER" id="PTHR35352:SF1">
    <property type="entry name" value="COILED-COIL DOMAIN-CONTAINING PROTEIN 150"/>
    <property type="match status" value="1"/>
</dbReference>
<reference key="1">
    <citation type="journal article" date="2005" name="Science">
        <title>The transcriptional landscape of the mammalian genome.</title>
        <authorList>
            <person name="Carninci P."/>
            <person name="Kasukawa T."/>
            <person name="Katayama S."/>
            <person name="Gough J."/>
            <person name="Frith M.C."/>
            <person name="Maeda N."/>
            <person name="Oyama R."/>
            <person name="Ravasi T."/>
            <person name="Lenhard B."/>
            <person name="Wells C."/>
            <person name="Kodzius R."/>
            <person name="Shimokawa K."/>
            <person name="Bajic V.B."/>
            <person name="Brenner S.E."/>
            <person name="Batalov S."/>
            <person name="Forrest A.R."/>
            <person name="Zavolan M."/>
            <person name="Davis M.J."/>
            <person name="Wilming L.G."/>
            <person name="Aidinis V."/>
            <person name="Allen J.E."/>
            <person name="Ambesi-Impiombato A."/>
            <person name="Apweiler R."/>
            <person name="Aturaliya R.N."/>
            <person name="Bailey T.L."/>
            <person name="Bansal M."/>
            <person name="Baxter L."/>
            <person name="Beisel K.W."/>
            <person name="Bersano T."/>
            <person name="Bono H."/>
            <person name="Chalk A.M."/>
            <person name="Chiu K.P."/>
            <person name="Choudhary V."/>
            <person name="Christoffels A."/>
            <person name="Clutterbuck D.R."/>
            <person name="Crowe M.L."/>
            <person name="Dalla E."/>
            <person name="Dalrymple B.P."/>
            <person name="de Bono B."/>
            <person name="Della Gatta G."/>
            <person name="di Bernardo D."/>
            <person name="Down T."/>
            <person name="Engstrom P."/>
            <person name="Fagiolini M."/>
            <person name="Faulkner G."/>
            <person name="Fletcher C.F."/>
            <person name="Fukushima T."/>
            <person name="Furuno M."/>
            <person name="Futaki S."/>
            <person name="Gariboldi M."/>
            <person name="Georgii-Hemming P."/>
            <person name="Gingeras T.R."/>
            <person name="Gojobori T."/>
            <person name="Green R.E."/>
            <person name="Gustincich S."/>
            <person name="Harbers M."/>
            <person name="Hayashi Y."/>
            <person name="Hensch T.K."/>
            <person name="Hirokawa N."/>
            <person name="Hill D."/>
            <person name="Huminiecki L."/>
            <person name="Iacono M."/>
            <person name="Ikeo K."/>
            <person name="Iwama A."/>
            <person name="Ishikawa T."/>
            <person name="Jakt M."/>
            <person name="Kanapin A."/>
            <person name="Katoh M."/>
            <person name="Kawasawa Y."/>
            <person name="Kelso J."/>
            <person name="Kitamura H."/>
            <person name="Kitano H."/>
            <person name="Kollias G."/>
            <person name="Krishnan S.P."/>
            <person name="Kruger A."/>
            <person name="Kummerfeld S.K."/>
            <person name="Kurochkin I.V."/>
            <person name="Lareau L.F."/>
            <person name="Lazarevic D."/>
            <person name="Lipovich L."/>
            <person name="Liu J."/>
            <person name="Liuni S."/>
            <person name="McWilliam S."/>
            <person name="Madan Babu M."/>
            <person name="Madera M."/>
            <person name="Marchionni L."/>
            <person name="Matsuda H."/>
            <person name="Matsuzawa S."/>
            <person name="Miki H."/>
            <person name="Mignone F."/>
            <person name="Miyake S."/>
            <person name="Morris K."/>
            <person name="Mottagui-Tabar S."/>
            <person name="Mulder N."/>
            <person name="Nakano N."/>
            <person name="Nakauchi H."/>
            <person name="Ng P."/>
            <person name="Nilsson R."/>
            <person name="Nishiguchi S."/>
            <person name="Nishikawa S."/>
            <person name="Nori F."/>
            <person name="Ohara O."/>
            <person name="Okazaki Y."/>
            <person name="Orlando V."/>
            <person name="Pang K.C."/>
            <person name="Pavan W.J."/>
            <person name="Pavesi G."/>
            <person name="Pesole G."/>
            <person name="Petrovsky N."/>
            <person name="Piazza S."/>
            <person name="Reed J."/>
            <person name="Reid J.F."/>
            <person name="Ring B.Z."/>
            <person name="Ringwald M."/>
            <person name="Rost B."/>
            <person name="Ruan Y."/>
            <person name="Salzberg S.L."/>
            <person name="Sandelin A."/>
            <person name="Schneider C."/>
            <person name="Schoenbach C."/>
            <person name="Sekiguchi K."/>
            <person name="Semple C.A."/>
            <person name="Seno S."/>
            <person name="Sessa L."/>
            <person name="Sheng Y."/>
            <person name="Shibata Y."/>
            <person name="Shimada H."/>
            <person name="Shimada K."/>
            <person name="Silva D."/>
            <person name="Sinclair B."/>
            <person name="Sperling S."/>
            <person name="Stupka E."/>
            <person name="Sugiura K."/>
            <person name="Sultana R."/>
            <person name="Takenaka Y."/>
            <person name="Taki K."/>
            <person name="Tammoja K."/>
            <person name="Tan S.L."/>
            <person name="Tang S."/>
            <person name="Taylor M.S."/>
            <person name="Tegner J."/>
            <person name="Teichmann S.A."/>
            <person name="Ueda H.R."/>
            <person name="van Nimwegen E."/>
            <person name="Verardo R."/>
            <person name="Wei C.L."/>
            <person name="Yagi K."/>
            <person name="Yamanishi H."/>
            <person name="Zabarovsky E."/>
            <person name="Zhu S."/>
            <person name="Zimmer A."/>
            <person name="Hide W."/>
            <person name="Bult C."/>
            <person name="Grimmond S.M."/>
            <person name="Teasdale R.D."/>
            <person name="Liu E.T."/>
            <person name="Brusic V."/>
            <person name="Quackenbush J."/>
            <person name="Wahlestedt C."/>
            <person name="Mattick J.S."/>
            <person name="Hume D.A."/>
            <person name="Kai C."/>
            <person name="Sasaki D."/>
            <person name="Tomaru Y."/>
            <person name="Fukuda S."/>
            <person name="Kanamori-Katayama M."/>
            <person name="Suzuki M."/>
            <person name="Aoki J."/>
            <person name="Arakawa T."/>
            <person name="Iida J."/>
            <person name="Imamura K."/>
            <person name="Itoh M."/>
            <person name="Kato T."/>
            <person name="Kawaji H."/>
            <person name="Kawagashira N."/>
            <person name="Kawashima T."/>
            <person name="Kojima M."/>
            <person name="Kondo S."/>
            <person name="Konno H."/>
            <person name="Nakano K."/>
            <person name="Ninomiya N."/>
            <person name="Nishio T."/>
            <person name="Okada M."/>
            <person name="Plessy C."/>
            <person name="Shibata K."/>
            <person name="Shiraki T."/>
            <person name="Suzuki S."/>
            <person name="Tagami M."/>
            <person name="Waki K."/>
            <person name="Watahiki A."/>
            <person name="Okamura-Oho Y."/>
            <person name="Suzuki H."/>
            <person name="Kawai J."/>
            <person name="Hayashizaki Y."/>
        </authorList>
    </citation>
    <scope>NUCLEOTIDE SEQUENCE [LARGE SCALE MRNA]</scope>
    <source>
        <strain>C57BL/6J</strain>
        <tissue>Testis</tissue>
    </source>
</reference>
<reference key="2">
    <citation type="journal article" date="2009" name="PLoS Biol.">
        <title>Lineage-specific biology revealed by a finished genome assembly of the mouse.</title>
        <authorList>
            <person name="Church D.M."/>
            <person name="Goodstadt L."/>
            <person name="Hillier L.W."/>
            <person name="Zody M.C."/>
            <person name="Goldstein S."/>
            <person name="She X."/>
            <person name="Bult C.J."/>
            <person name="Agarwala R."/>
            <person name="Cherry J.L."/>
            <person name="DiCuccio M."/>
            <person name="Hlavina W."/>
            <person name="Kapustin Y."/>
            <person name="Meric P."/>
            <person name="Maglott D."/>
            <person name="Birtle Z."/>
            <person name="Marques A.C."/>
            <person name="Graves T."/>
            <person name="Zhou S."/>
            <person name="Teague B."/>
            <person name="Potamousis K."/>
            <person name="Churas C."/>
            <person name="Place M."/>
            <person name="Herschleb J."/>
            <person name="Runnheim R."/>
            <person name="Forrest D."/>
            <person name="Amos-Landgraf J."/>
            <person name="Schwartz D.C."/>
            <person name="Cheng Z."/>
            <person name="Lindblad-Toh K."/>
            <person name="Eichler E.E."/>
            <person name="Ponting C.P."/>
        </authorList>
    </citation>
    <scope>NUCLEOTIDE SEQUENCE [LARGE SCALE GENOMIC DNA]</scope>
    <source>
        <strain>C57BL/6J</strain>
    </source>
</reference>
<gene>
    <name type="primary">Ccdc150</name>
</gene>
<sequence>METNLLPGGPSYGLLDESGVQMETTVCRPVLSPTHINGTASETFTVLQQKMRIVEEQTSSLRDDLIMLGYGDRRGQLETPNYLEDPASQKAISPIPNEVICPESPGNLWRNYEFLVNRMCYLENLIQSLKMNIFHLQTEKESNPQKTAFLNDQLNIIQGEHSKGLKLLQLEVMNLRQQLKVVKEEEDRAQDEMQRLTATLEIATETKKNAAVIEEELKTTKRKMNLKIQELRRQLAQEKLVRESLETSASSMLLKVQEMGSVVEAERQQVHALQEKCTALHSSMKTTQDLLAQEQRKNEDLGMTISQLKSDLNSRDNLICKLVEENKATQISLKKEHEENIYLKSEILSLQDVSGKAQVLNDQLSKKCSELTSMLQVVKMENSRIIAEHQAILKVEQKMITETFQEQNLLLDAAHASITGELQAVQNEKAQLQIHLDHLILEHNQCLQKSQEAEKRTVVQKELLESTIARLQGELKASLQEKKSLLEKNEWFQREVNKTEKEVAKEKCNLEKELAESKEDINVLNQNLQTLMEENKHLTNKMASLEHHKATSDYQGKVEKALEKITDSKNMLAYEKGKLQTKVKQLEAQLHTFAETMLQKDHLHKLNKALEVKYTQANSELSASKAYLEQTEAHLKEMKSILGKNEEELAQAVKCRDAALKESQKLKGDLKALEDRESKKVGNFQKQLAEAKEDNCKVTIMLENVLASHSKMQGALEKVQIELGRRDSEIAGLKKERSLNQQRVQKLEAEVDQWQARMLIVEAQHGSEIEPLQKSLDITREDNRKLAMSLEQALQTNGHLQSKLDHLQEKLESKERERQSLEAFKEQVAEESKVEAELHAERIEALRKQFQTERETAKKASQREVSELKKALDEANFRSVEVSRANRELRHKATELEKVVNSNKEKLKNQRAQIKLHLSAKANNAQNMERMKQIEMELRQMEIIKDQYQKKNYEQSLSIQRFVSEMNTLQKEMELLTKSQYETSARNKQQELRLVAERKMRLELENRCKELEETIRHLKRCKEATENKLKEASVESEQITANLEEAHRWFKCRFDGLQLELTKNRLQRLPREDRWLEENQDMMHNVATSQSVLHRWETKQKYHSDTERKK</sequence>
<evidence type="ECO:0000255" key="1"/>
<evidence type="ECO:0000305" key="2"/>
<accession>Q8CDI7</accession>
<accession>E9QMC0</accession>
<feature type="chain" id="PRO_0000328985" description="Coiled-coil domain-containing protein 150">
    <location>
        <begin position="1"/>
        <end position="1110"/>
    </location>
</feature>
<feature type="coiled-coil region" evidence="1">
    <location>
        <begin position="122"/>
        <end position="250"/>
    </location>
</feature>
<feature type="coiled-coil region" evidence="1">
    <location>
        <begin position="288"/>
        <end position="313"/>
    </location>
</feature>
<feature type="coiled-coil region" evidence="1">
    <location>
        <begin position="413"/>
        <end position="695"/>
    </location>
</feature>
<feature type="coiled-coil region" evidence="1">
    <location>
        <begin position="728"/>
        <end position="1048"/>
    </location>
</feature>
<feature type="sequence conflict" description="In Ref. 1; BAC26722." evidence="2" ref="1">
    <original>V</original>
    <variation>I</variation>
    <location>
        <position position="496"/>
    </location>
</feature>
<keyword id="KW-0175">Coiled coil</keyword>
<keyword id="KW-1185">Reference proteome</keyword>
<protein>
    <recommendedName>
        <fullName>Coiled-coil domain-containing protein 150</fullName>
    </recommendedName>
</protein>
<name>CC150_MOUSE</name>
<organism>
    <name type="scientific">Mus musculus</name>
    <name type="common">Mouse</name>
    <dbReference type="NCBI Taxonomy" id="10090"/>
    <lineage>
        <taxon>Eukaryota</taxon>
        <taxon>Metazoa</taxon>
        <taxon>Chordata</taxon>
        <taxon>Craniata</taxon>
        <taxon>Vertebrata</taxon>
        <taxon>Euteleostomi</taxon>
        <taxon>Mammalia</taxon>
        <taxon>Eutheria</taxon>
        <taxon>Euarchontoglires</taxon>
        <taxon>Glires</taxon>
        <taxon>Rodentia</taxon>
        <taxon>Myomorpha</taxon>
        <taxon>Muroidea</taxon>
        <taxon>Muridae</taxon>
        <taxon>Murinae</taxon>
        <taxon>Mus</taxon>
        <taxon>Mus</taxon>
    </lineage>
</organism>
<proteinExistence type="evidence at transcript level"/>